<evidence type="ECO:0000255" key="1">
    <source>
        <dbReference type="HAMAP-Rule" id="MF_00693"/>
    </source>
</evidence>
<accession>B7I4G5</accession>
<gene>
    <name type="ordered locus">AB57_1731</name>
</gene>
<dbReference type="EMBL" id="CP001182">
    <property type="protein sequence ID" value="ACJ41113.1"/>
    <property type="molecule type" value="Genomic_DNA"/>
</dbReference>
<dbReference type="RefSeq" id="WP_000907230.1">
    <property type="nucleotide sequence ID" value="NC_011586.2"/>
</dbReference>
<dbReference type="SMR" id="B7I4G5"/>
<dbReference type="KEGG" id="abn:AB57_1731"/>
<dbReference type="HOGENOM" id="CLU_062974_2_2_6"/>
<dbReference type="Proteomes" id="UP000007094">
    <property type="component" value="Chromosome"/>
</dbReference>
<dbReference type="GO" id="GO:0005829">
    <property type="term" value="C:cytosol"/>
    <property type="evidence" value="ECO:0007669"/>
    <property type="project" value="TreeGrafter"/>
</dbReference>
<dbReference type="GO" id="GO:0003677">
    <property type="term" value="F:DNA binding"/>
    <property type="evidence" value="ECO:0007669"/>
    <property type="project" value="UniProtKB-UniRule"/>
</dbReference>
<dbReference type="GO" id="GO:0006355">
    <property type="term" value="P:regulation of DNA-templated transcription"/>
    <property type="evidence" value="ECO:0007669"/>
    <property type="project" value="UniProtKB-UniRule"/>
</dbReference>
<dbReference type="FunFam" id="1.10.10.200:FF:000001">
    <property type="entry name" value="Probable transcriptional regulatory protein YebC"/>
    <property type="match status" value="1"/>
</dbReference>
<dbReference type="FunFam" id="3.30.70.980:FF:000002">
    <property type="entry name" value="Probable transcriptional regulatory protein YebC"/>
    <property type="match status" value="1"/>
</dbReference>
<dbReference type="Gene3D" id="1.10.10.200">
    <property type="match status" value="1"/>
</dbReference>
<dbReference type="Gene3D" id="3.30.70.980">
    <property type="match status" value="2"/>
</dbReference>
<dbReference type="HAMAP" id="MF_00693">
    <property type="entry name" value="Transcrip_reg_TACO1"/>
    <property type="match status" value="1"/>
</dbReference>
<dbReference type="InterPro" id="IPR017856">
    <property type="entry name" value="Integrase-like_N"/>
</dbReference>
<dbReference type="InterPro" id="IPR048300">
    <property type="entry name" value="TACO1_YebC-like_2nd/3rd_dom"/>
</dbReference>
<dbReference type="InterPro" id="IPR049083">
    <property type="entry name" value="TACO1_YebC_N"/>
</dbReference>
<dbReference type="InterPro" id="IPR002876">
    <property type="entry name" value="Transcrip_reg_TACO1-like"/>
</dbReference>
<dbReference type="InterPro" id="IPR026564">
    <property type="entry name" value="Transcrip_reg_TACO1-like_dom3"/>
</dbReference>
<dbReference type="InterPro" id="IPR029072">
    <property type="entry name" value="YebC-like"/>
</dbReference>
<dbReference type="NCBIfam" id="NF001030">
    <property type="entry name" value="PRK00110.1"/>
    <property type="match status" value="1"/>
</dbReference>
<dbReference type="NCBIfam" id="NF009044">
    <property type="entry name" value="PRK12378.1"/>
    <property type="match status" value="1"/>
</dbReference>
<dbReference type="NCBIfam" id="TIGR01033">
    <property type="entry name" value="YebC/PmpR family DNA-binding transcriptional regulator"/>
    <property type="match status" value="1"/>
</dbReference>
<dbReference type="PANTHER" id="PTHR12532:SF6">
    <property type="entry name" value="TRANSCRIPTIONAL REGULATORY PROTEIN YEBC-RELATED"/>
    <property type="match status" value="1"/>
</dbReference>
<dbReference type="PANTHER" id="PTHR12532">
    <property type="entry name" value="TRANSLATIONAL ACTIVATOR OF CYTOCHROME C OXIDASE 1"/>
    <property type="match status" value="1"/>
</dbReference>
<dbReference type="Pfam" id="PF20772">
    <property type="entry name" value="TACO1_YebC_N"/>
    <property type="match status" value="1"/>
</dbReference>
<dbReference type="Pfam" id="PF01709">
    <property type="entry name" value="Transcrip_reg"/>
    <property type="match status" value="1"/>
</dbReference>
<dbReference type="SUPFAM" id="SSF75625">
    <property type="entry name" value="YebC-like"/>
    <property type="match status" value="1"/>
</dbReference>
<protein>
    <recommendedName>
        <fullName evidence="1">Probable transcriptional regulatory protein AB57_1731</fullName>
    </recommendedName>
</protein>
<sequence>MAGHSKWANIKHRKAKQDASRGKVFTKYIREIVTAAKLGGADPASNPRLRAVVEKALSVNMTRDTINRAIQRGVGGEDNDDLKEVTYEGYGVGGVAVLVETMTDNLNRTVPDVRHCFSKTNGNLGTAGSVAYLFTKRGEITFDDVSLEDKIMDVALEAGAEDIEVSEDEILVITSPETFGEVQDALAAAGLKSDNAEVVMSPSTKAEITDIDQAKQVMKLIDMLEDLDDVQNVYTNVEFSDEVLAQLDA</sequence>
<proteinExistence type="inferred from homology"/>
<reference key="1">
    <citation type="journal article" date="2008" name="J. Bacteriol.">
        <title>Comparative genome sequence analysis of multidrug-resistant Acinetobacter baumannii.</title>
        <authorList>
            <person name="Adams M.D."/>
            <person name="Goglin K."/>
            <person name="Molyneaux N."/>
            <person name="Hujer K.M."/>
            <person name="Lavender H."/>
            <person name="Jamison J.J."/>
            <person name="MacDonald I.J."/>
            <person name="Martin K.M."/>
            <person name="Russo T."/>
            <person name="Campagnari A.A."/>
            <person name="Hujer A.M."/>
            <person name="Bonomo R.A."/>
            <person name="Gill S.R."/>
        </authorList>
    </citation>
    <scope>NUCLEOTIDE SEQUENCE [LARGE SCALE GENOMIC DNA]</scope>
    <source>
        <strain>AB0057</strain>
    </source>
</reference>
<keyword id="KW-0963">Cytoplasm</keyword>
<keyword id="KW-0238">DNA-binding</keyword>
<keyword id="KW-0804">Transcription</keyword>
<keyword id="KW-0805">Transcription regulation</keyword>
<name>Y1731_ACIB5</name>
<comment type="subcellular location">
    <subcellularLocation>
        <location evidence="1">Cytoplasm</location>
    </subcellularLocation>
</comment>
<comment type="similarity">
    <text evidence="1">Belongs to the TACO1 family.</text>
</comment>
<feature type="chain" id="PRO_1000132136" description="Probable transcriptional regulatory protein AB57_1731">
    <location>
        <begin position="1"/>
        <end position="249"/>
    </location>
</feature>
<organism>
    <name type="scientific">Acinetobacter baumannii (strain AB0057)</name>
    <dbReference type="NCBI Taxonomy" id="480119"/>
    <lineage>
        <taxon>Bacteria</taxon>
        <taxon>Pseudomonadati</taxon>
        <taxon>Pseudomonadota</taxon>
        <taxon>Gammaproteobacteria</taxon>
        <taxon>Moraxellales</taxon>
        <taxon>Moraxellaceae</taxon>
        <taxon>Acinetobacter</taxon>
        <taxon>Acinetobacter calcoaceticus/baumannii complex</taxon>
    </lineage>
</organism>